<evidence type="ECO:0000305" key="1"/>
<protein>
    <recommendedName>
        <fullName>UPF0538 protein C2orf76 homolog</fullName>
    </recommendedName>
</protein>
<reference key="1">
    <citation type="submission" date="2004-11" db="EMBL/GenBank/DDBJ databases">
        <authorList>
            <consortium name="The German cDNA consortium"/>
        </authorList>
    </citation>
    <scope>NUCLEOTIDE SEQUENCE [LARGE SCALE MRNA]</scope>
    <source>
        <tissue>Kidney</tissue>
    </source>
</reference>
<accession>Q5RBS7</accession>
<organism>
    <name type="scientific">Pongo abelii</name>
    <name type="common">Sumatran orangutan</name>
    <name type="synonym">Pongo pygmaeus abelii</name>
    <dbReference type="NCBI Taxonomy" id="9601"/>
    <lineage>
        <taxon>Eukaryota</taxon>
        <taxon>Metazoa</taxon>
        <taxon>Chordata</taxon>
        <taxon>Craniata</taxon>
        <taxon>Vertebrata</taxon>
        <taxon>Euteleostomi</taxon>
        <taxon>Mammalia</taxon>
        <taxon>Eutheria</taxon>
        <taxon>Euarchontoglires</taxon>
        <taxon>Primates</taxon>
        <taxon>Haplorrhini</taxon>
        <taxon>Catarrhini</taxon>
        <taxon>Hominidae</taxon>
        <taxon>Pongo</taxon>
    </lineage>
</organism>
<name>CB076_PONAB</name>
<proteinExistence type="evidence at transcript level"/>
<comment type="similarity">
    <text evidence="1">Belongs to the UPF0538 family.</text>
</comment>
<dbReference type="EMBL" id="CR858556">
    <property type="protein sequence ID" value="CAH90783.1"/>
    <property type="molecule type" value="mRNA"/>
</dbReference>
<dbReference type="RefSeq" id="NP_001125442.1">
    <property type="nucleotide sequence ID" value="NM_001131970.2"/>
</dbReference>
<dbReference type="RefSeq" id="XP_009235919.1">
    <property type="nucleotide sequence ID" value="XM_009237644.3"/>
</dbReference>
<dbReference type="RefSeq" id="XP_009235920.1">
    <property type="nucleotide sequence ID" value="XM_009237645.1"/>
</dbReference>
<dbReference type="RefSeq" id="XP_009235921.1">
    <property type="nucleotide sequence ID" value="XM_009237646.1"/>
</dbReference>
<dbReference type="FunCoup" id="Q5RBS7">
    <property type="interactions" value="415"/>
</dbReference>
<dbReference type="Ensembl" id="ENSPPYT00000014852.2">
    <property type="protein sequence ID" value="ENSPPYP00000014271.2"/>
    <property type="gene ID" value="ENSPPYG00000012789.2"/>
</dbReference>
<dbReference type="GeneID" id="100172350"/>
<dbReference type="KEGG" id="pon:100172350"/>
<dbReference type="CTD" id="117426676"/>
<dbReference type="eggNOG" id="KOG4147">
    <property type="taxonomic scope" value="Eukaryota"/>
</dbReference>
<dbReference type="GeneTree" id="ENSGT00390000015352"/>
<dbReference type="HOGENOM" id="CLU_117792_1_0_1"/>
<dbReference type="InParanoid" id="Q5RBS7"/>
<dbReference type="OMA" id="YRNVKNH"/>
<dbReference type="OrthoDB" id="937at2759"/>
<dbReference type="Proteomes" id="UP000001595">
    <property type="component" value="Chromosome 2B"/>
</dbReference>
<dbReference type="InterPro" id="IPR018794">
    <property type="entry name" value="UPF0538"/>
</dbReference>
<dbReference type="PANTHER" id="PTHR18444">
    <property type="entry name" value="UPF0538 FAMILY MEMBER"/>
    <property type="match status" value="1"/>
</dbReference>
<dbReference type="PANTHER" id="PTHR18444:SF9">
    <property type="entry name" value="UPF0538 PROTEIN C2ORF76"/>
    <property type="match status" value="1"/>
</dbReference>
<dbReference type="Pfam" id="PF10209">
    <property type="entry name" value="DUF2340"/>
    <property type="match status" value="1"/>
</dbReference>
<feature type="chain" id="PRO_0000325826" description="UPF0538 protein C2orf76 homolog">
    <location>
        <begin position="1"/>
        <end position="126"/>
    </location>
</feature>
<keyword id="KW-1185">Reference proteome</keyword>
<sequence>MAPEEVTITVRLIRSFEHRNFKPVVYHGVNLDQTVKEFIIFLKQDVPLRTSLPPPFRNYKYDTLKIIHQAHKSKTNELVLSLEDDDRLLLKEDSTLKAAGIASETEIAFFCEEDYKNYKANPISSW</sequence>